<evidence type="ECO:0000250" key="1"/>
<evidence type="ECO:0000250" key="2">
    <source>
        <dbReference type="UniProtKB" id="Q9H2A2"/>
    </source>
</evidence>
<evidence type="ECO:0000255" key="3">
    <source>
        <dbReference type="PROSITE-ProRule" id="PRU10007"/>
    </source>
</evidence>
<evidence type="ECO:0000255" key="4">
    <source>
        <dbReference type="PROSITE-ProRule" id="PRU10008"/>
    </source>
</evidence>
<evidence type="ECO:0000305" key="5"/>
<keyword id="KW-0963">Cytoplasm</keyword>
<keyword id="KW-0520">NAD</keyword>
<keyword id="KW-0560">Oxidoreductase</keyword>
<keyword id="KW-1185">Reference proteome</keyword>
<accession>Q0P5F9</accession>
<accession>A1L594</accession>
<sequence>MAGRGGLLMLENFIGGKFLPCSSYLDSYDPSTGEVYCHVPNSGKEEIEAAVEAARAAFPGWSSRSPQERSQVLQRLADLLEQSLEELAQAESKDQGKTITLARTMDIPRAVHNFRFFASSILHHTSECTQMDHLGCLHYTVRAPVGIAALISPWNLPLYLLTWKIAPAIAAGNTVIAKPSELTSVTAWMMCRLLEKAGVPPGVVNIVFGTGPRVGEALVSHPEVPLISFTGSQPTAERIMQLSAPHCKKLSLELGGKNPAVIFEDANLAECIPTTVRSSFANQGEICLCTSRIFVQRSIYSEFLKRFVEAARMWKVGIPSDPSADMGALISKAHLEKVRSYIKKARMEGAQILCGEGVDKLNLPPRNQAGYFMLPTVITDVKDESCCMKEEIFGPVTCVVPFDSEEEVIQRANNVKYGLAATVWSGNVGRVHRVAKKLQSGLVWTNCWLIRELNLPFGGMKSSGVGREGAKDSYEFFTEVKTITVKH</sequence>
<organism>
    <name type="scientific">Bos taurus</name>
    <name type="common">Bovine</name>
    <dbReference type="NCBI Taxonomy" id="9913"/>
    <lineage>
        <taxon>Eukaryota</taxon>
        <taxon>Metazoa</taxon>
        <taxon>Chordata</taxon>
        <taxon>Craniata</taxon>
        <taxon>Vertebrata</taxon>
        <taxon>Euteleostomi</taxon>
        <taxon>Mammalia</taxon>
        <taxon>Eutheria</taxon>
        <taxon>Laurasiatheria</taxon>
        <taxon>Artiodactyla</taxon>
        <taxon>Ruminantia</taxon>
        <taxon>Pecora</taxon>
        <taxon>Bovidae</taxon>
        <taxon>Bovinae</taxon>
        <taxon>Bos</taxon>
    </lineage>
</organism>
<dbReference type="EC" id="1.2.1.32" evidence="2"/>
<dbReference type="EMBL" id="BT029881">
    <property type="protein sequence ID" value="ABM06132.1"/>
    <property type="molecule type" value="mRNA"/>
</dbReference>
<dbReference type="EMBL" id="BC120092">
    <property type="protein sequence ID" value="AAI20093.1"/>
    <property type="molecule type" value="mRNA"/>
</dbReference>
<dbReference type="RefSeq" id="NP_001069094.1">
    <property type="nucleotide sequence ID" value="NM_001075626.1"/>
</dbReference>
<dbReference type="SMR" id="Q0P5F9"/>
<dbReference type="FunCoup" id="Q0P5F9">
    <property type="interactions" value="33"/>
</dbReference>
<dbReference type="STRING" id="9913.ENSBTAP00000010485"/>
<dbReference type="PaxDb" id="9913-ENSBTAP00000010485"/>
<dbReference type="PeptideAtlas" id="Q0P5F9"/>
<dbReference type="GeneID" id="513537"/>
<dbReference type="KEGG" id="bta:513537"/>
<dbReference type="CTD" id="64577"/>
<dbReference type="eggNOG" id="KOG2450">
    <property type="taxonomic scope" value="Eukaryota"/>
</dbReference>
<dbReference type="HOGENOM" id="CLU_005391_0_0_1"/>
<dbReference type="InParanoid" id="Q0P5F9"/>
<dbReference type="OrthoDB" id="310895at2759"/>
<dbReference type="TreeFam" id="TF314129"/>
<dbReference type="UniPathway" id="UPA00334"/>
<dbReference type="Proteomes" id="UP000009136">
    <property type="component" value="Unplaced"/>
</dbReference>
<dbReference type="GO" id="GO:0005737">
    <property type="term" value="C:cytoplasm"/>
    <property type="evidence" value="ECO:0007669"/>
    <property type="project" value="UniProtKB-SubCell"/>
</dbReference>
<dbReference type="GO" id="GO:0047102">
    <property type="term" value="F:aminomuconate-semialdehyde dehydrogenase activity"/>
    <property type="evidence" value="ECO:0007669"/>
    <property type="project" value="UniProtKB-EC"/>
</dbReference>
<dbReference type="GO" id="GO:0001758">
    <property type="term" value="F:retinal dehydrogenase activity"/>
    <property type="evidence" value="ECO:0000250"/>
    <property type="project" value="UniProtKB"/>
</dbReference>
<dbReference type="GO" id="GO:0097053">
    <property type="term" value="P:L-kynurenine catabolic process"/>
    <property type="evidence" value="ECO:0007669"/>
    <property type="project" value="UniProtKB-UniPathway"/>
</dbReference>
<dbReference type="GO" id="GO:0042574">
    <property type="term" value="P:retinal metabolic process"/>
    <property type="evidence" value="ECO:0000250"/>
    <property type="project" value="UniProtKB"/>
</dbReference>
<dbReference type="GO" id="GO:0042573">
    <property type="term" value="P:retinoic acid metabolic process"/>
    <property type="evidence" value="ECO:0000250"/>
    <property type="project" value="UniProtKB"/>
</dbReference>
<dbReference type="CDD" id="cd07093">
    <property type="entry name" value="ALDH_F8_HMSADH"/>
    <property type="match status" value="1"/>
</dbReference>
<dbReference type="FunFam" id="3.40.605.10:FF:000001">
    <property type="entry name" value="Aldehyde dehydrogenase 1"/>
    <property type="match status" value="1"/>
</dbReference>
<dbReference type="FunFam" id="3.40.309.10:FF:000021">
    <property type="entry name" value="Aldehyde dehydrogenase family 8 member A1"/>
    <property type="match status" value="1"/>
</dbReference>
<dbReference type="Gene3D" id="3.40.605.10">
    <property type="entry name" value="Aldehyde Dehydrogenase, Chain A, domain 1"/>
    <property type="match status" value="1"/>
</dbReference>
<dbReference type="Gene3D" id="3.40.309.10">
    <property type="entry name" value="Aldehyde Dehydrogenase, Chain A, domain 2"/>
    <property type="match status" value="1"/>
</dbReference>
<dbReference type="InterPro" id="IPR016161">
    <property type="entry name" value="Ald_DH/histidinol_DH"/>
</dbReference>
<dbReference type="InterPro" id="IPR016163">
    <property type="entry name" value="Ald_DH_C"/>
</dbReference>
<dbReference type="InterPro" id="IPR016160">
    <property type="entry name" value="Ald_DH_CS_CYS"/>
</dbReference>
<dbReference type="InterPro" id="IPR029510">
    <property type="entry name" value="Ald_DH_CS_GLU"/>
</dbReference>
<dbReference type="InterPro" id="IPR016162">
    <property type="entry name" value="Ald_DH_N"/>
</dbReference>
<dbReference type="InterPro" id="IPR015590">
    <property type="entry name" value="Aldehyde_DH_dom"/>
</dbReference>
<dbReference type="PANTHER" id="PTHR43720">
    <property type="entry name" value="2-AMINOMUCONIC SEMIALDEHYDE DEHYDROGENASE"/>
    <property type="match status" value="1"/>
</dbReference>
<dbReference type="PANTHER" id="PTHR43720:SF2">
    <property type="entry name" value="2-AMINOMUCONIC SEMIALDEHYDE DEHYDROGENASE"/>
    <property type="match status" value="1"/>
</dbReference>
<dbReference type="Pfam" id="PF00171">
    <property type="entry name" value="Aldedh"/>
    <property type="match status" value="1"/>
</dbReference>
<dbReference type="SUPFAM" id="SSF53720">
    <property type="entry name" value="ALDH-like"/>
    <property type="match status" value="1"/>
</dbReference>
<dbReference type="PROSITE" id="PS00070">
    <property type="entry name" value="ALDEHYDE_DEHYDR_CYS"/>
    <property type="match status" value="1"/>
</dbReference>
<dbReference type="PROSITE" id="PS00687">
    <property type="entry name" value="ALDEHYDE_DEHYDR_GLU"/>
    <property type="match status" value="1"/>
</dbReference>
<proteinExistence type="evidence at transcript level"/>
<protein>
    <recommendedName>
        <fullName>2-aminomuconic semialdehyde dehydrogenase</fullName>
        <ecNumber evidence="2">1.2.1.32</ecNumber>
    </recommendedName>
    <alternativeName>
        <fullName>Aldehyde dehydrogenase family 8 member A1</fullName>
    </alternativeName>
</protein>
<name>AL8A1_BOVIN</name>
<comment type="function">
    <text evidence="2">Catalyzes the NAD-dependent oxidation of 2-aminomuconic semialdehyde of the kynurenine metabolic pathway in L-tryptophan degradation.</text>
</comment>
<comment type="catalytic activity">
    <reaction evidence="2">
        <text>2-aminomuconate 6-semialdehyde + NAD(+) + H2O = (2Z,4E)-2-aminomuconate + NADH + 2 H(+)</text>
        <dbReference type="Rhea" id="RHEA:14469"/>
        <dbReference type="ChEBI" id="CHEBI:15377"/>
        <dbReference type="ChEBI" id="CHEBI:15378"/>
        <dbReference type="ChEBI" id="CHEBI:57540"/>
        <dbReference type="ChEBI" id="CHEBI:57945"/>
        <dbReference type="ChEBI" id="CHEBI:77634"/>
        <dbReference type="ChEBI" id="CHEBI:77859"/>
        <dbReference type="EC" id="1.2.1.32"/>
    </reaction>
</comment>
<comment type="pathway">
    <text evidence="2">Amino-acid degradation; L-kynurenine degradation.</text>
</comment>
<comment type="subcellular location">
    <subcellularLocation>
        <location evidence="1">Cytoplasm</location>
    </subcellularLocation>
</comment>
<comment type="similarity">
    <text evidence="5">Belongs to the aldehyde dehydrogenase family.</text>
</comment>
<feature type="chain" id="PRO_0000312953" description="2-aminomuconic semialdehyde dehydrogenase">
    <location>
        <begin position="1"/>
        <end position="487"/>
    </location>
</feature>
<feature type="active site" description="Proton acceptor" evidence="3 4">
    <location>
        <position position="253"/>
    </location>
</feature>
<feature type="active site" description="Nucleophile" evidence="3 4">
    <location>
        <position position="287"/>
    </location>
</feature>
<feature type="binding site" evidence="1">
    <location>
        <begin position="231"/>
        <end position="236"/>
    </location>
    <ligand>
        <name>NAD(+)</name>
        <dbReference type="ChEBI" id="CHEBI:57540"/>
    </ligand>
</feature>
<feature type="site" description="Transition state stabilizer" evidence="1">
    <location>
        <position position="155"/>
    </location>
</feature>
<feature type="sequence conflict" description="In Ref. 1; ABM06132." evidence="5" ref="1">
    <original>I</original>
    <variation>V</variation>
    <location>
        <position position="47"/>
    </location>
</feature>
<reference key="1">
    <citation type="journal article" date="2005" name="BMC Genomics">
        <title>Characterization of 954 bovine full-CDS cDNA sequences.</title>
        <authorList>
            <person name="Harhay G.P."/>
            <person name="Sonstegard T.S."/>
            <person name="Keele J.W."/>
            <person name="Heaton M.P."/>
            <person name="Clawson M.L."/>
            <person name="Snelling W.M."/>
            <person name="Wiedmann R.T."/>
            <person name="Van Tassell C.P."/>
            <person name="Smith T.P.L."/>
        </authorList>
    </citation>
    <scope>NUCLEOTIDE SEQUENCE [LARGE SCALE MRNA]</scope>
</reference>
<reference key="2">
    <citation type="submission" date="2006-08" db="EMBL/GenBank/DDBJ databases">
        <authorList>
            <consortium name="NIH - Mammalian Gene Collection (MGC) project"/>
        </authorList>
    </citation>
    <scope>NUCLEOTIDE SEQUENCE [LARGE SCALE MRNA]</scope>
    <source>
        <strain>Hereford</strain>
        <tissue>Fetal liver</tissue>
    </source>
</reference>
<gene>
    <name type="primary">ALDH8A1</name>
</gene>